<gene>
    <name evidence="1" type="primary">argC</name>
    <name type="ordered locus">ABBFA_001541</name>
</gene>
<organism>
    <name type="scientific">Acinetobacter baumannii (strain AB307-0294)</name>
    <dbReference type="NCBI Taxonomy" id="557600"/>
    <lineage>
        <taxon>Bacteria</taxon>
        <taxon>Pseudomonadati</taxon>
        <taxon>Pseudomonadota</taxon>
        <taxon>Gammaproteobacteria</taxon>
        <taxon>Moraxellales</taxon>
        <taxon>Moraxellaceae</taxon>
        <taxon>Acinetobacter</taxon>
        <taxon>Acinetobacter calcoaceticus/baumannii complex</taxon>
    </lineage>
</organism>
<dbReference type="EC" id="1.2.1.38" evidence="1"/>
<dbReference type="EMBL" id="CP001172">
    <property type="protein sequence ID" value="ACJ56503.1"/>
    <property type="molecule type" value="Genomic_DNA"/>
</dbReference>
<dbReference type="SMR" id="B7H211"/>
<dbReference type="HOGENOM" id="CLU_006384_0_1_6"/>
<dbReference type="UniPathway" id="UPA00068">
    <property type="reaction ID" value="UER00108"/>
</dbReference>
<dbReference type="Proteomes" id="UP000006924">
    <property type="component" value="Chromosome"/>
</dbReference>
<dbReference type="GO" id="GO:0005737">
    <property type="term" value="C:cytoplasm"/>
    <property type="evidence" value="ECO:0007669"/>
    <property type="project" value="UniProtKB-SubCell"/>
</dbReference>
<dbReference type="GO" id="GO:0003942">
    <property type="term" value="F:N-acetyl-gamma-glutamyl-phosphate reductase activity"/>
    <property type="evidence" value="ECO:0007669"/>
    <property type="project" value="UniProtKB-UniRule"/>
</dbReference>
<dbReference type="GO" id="GO:0051287">
    <property type="term" value="F:NAD binding"/>
    <property type="evidence" value="ECO:0007669"/>
    <property type="project" value="InterPro"/>
</dbReference>
<dbReference type="GO" id="GO:0070401">
    <property type="term" value="F:NADP+ binding"/>
    <property type="evidence" value="ECO:0007669"/>
    <property type="project" value="InterPro"/>
</dbReference>
<dbReference type="GO" id="GO:0006526">
    <property type="term" value="P:L-arginine biosynthetic process"/>
    <property type="evidence" value="ECO:0007669"/>
    <property type="project" value="UniProtKB-UniRule"/>
</dbReference>
<dbReference type="CDD" id="cd23934">
    <property type="entry name" value="AGPR_1_C"/>
    <property type="match status" value="1"/>
</dbReference>
<dbReference type="CDD" id="cd17895">
    <property type="entry name" value="AGPR_1_N"/>
    <property type="match status" value="1"/>
</dbReference>
<dbReference type="FunFam" id="3.30.360.10:FF:000014">
    <property type="entry name" value="N-acetyl-gamma-glutamyl-phosphate reductase"/>
    <property type="match status" value="1"/>
</dbReference>
<dbReference type="Gene3D" id="3.30.360.10">
    <property type="entry name" value="Dihydrodipicolinate Reductase, domain 2"/>
    <property type="match status" value="1"/>
</dbReference>
<dbReference type="Gene3D" id="3.40.50.720">
    <property type="entry name" value="NAD(P)-binding Rossmann-like Domain"/>
    <property type="match status" value="1"/>
</dbReference>
<dbReference type="HAMAP" id="MF_00150">
    <property type="entry name" value="ArgC_type1"/>
    <property type="match status" value="1"/>
</dbReference>
<dbReference type="InterPro" id="IPR023013">
    <property type="entry name" value="AGPR_AS"/>
</dbReference>
<dbReference type="InterPro" id="IPR000706">
    <property type="entry name" value="AGPR_type-1"/>
</dbReference>
<dbReference type="InterPro" id="IPR036291">
    <property type="entry name" value="NAD(P)-bd_dom_sf"/>
</dbReference>
<dbReference type="InterPro" id="IPR050085">
    <property type="entry name" value="NAGSA_dehydrogenase"/>
</dbReference>
<dbReference type="InterPro" id="IPR000534">
    <property type="entry name" value="Semialdehyde_DH_NAD-bd"/>
</dbReference>
<dbReference type="NCBIfam" id="TIGR01850">
    <property type="entry name" value="argC"/>
    <property type="match status" value="1"/>
</dbReference>
<dbReference type="PANTHER" id="PTHR32338:SF10">
    <property type="entry name" value="N-ACETYL-GAMMA-GLUTAMYL-PHOSPHATE REDUCTASE, CHLOROPLASTIC-RELATED"/>
    <property type="match status" value="1"/>
</dbReference>
<dbReference type="PANTHER" id="PTHR32338">
    <property type="entry name" value="N-ACETYL-GAMMA-GLUTAMYL-PHOSPHATE REDUCTASE, CHLOROPLASTIC-RELATED-RELATED"/>
    <property type="match status" value="1"/>
</dbReference>
<dbReference type="Pfam" id="PF01118">
    <property type="entry name" value="Semialdhyde_dh"/>
    <property type="match status" value="1"/>
</dbReference>
<dbReference type="Pfam" id="PF22698">
    <property type="entry name" value="Semialdhyde_dhC_1"/>
    <property type="match status" value="1"/>
</dbReference>
<dbReference type="SMART" id="SM00859">
    <property type="entry name" value="Semialdhyde_dh"/>
    <property type="match status" value="1"/>
</dbReference>
<dbReference type="SUPFAM" id="SSF55347">
    <property type="entry name" value="Glyceraldehyde-3-phosphate dehydrogenase-like, C-terminal domain"/>
    <property type="match status" value="1"/>
</dbReference>
<dbReference type="SUPFAM" id="SSF51735">
    <property type="entry name" value="NAD(P)-binding Rossmann-fold domains"/>
    <property type="match status" value="1"/>
</dbReference>
<dbReference type="PROSITE" id="PS01224">
    <property type="entry name" value="ARGC"/>
    <property type="match status" value="1"/>
</dbReference>
<feature type="chain" id="PRO_1000118049" description="N-acetyl-gamma-glutamyl-phosphate reductase">
    <location>
        <begin position="1"/>
        <end position="349"/>
    </location>
</feature>
<feature type="active site" evidence="1">
    <location>
        <position position="149"/>
    </location>
</feature>
<proteinExistence type="inferred from homology"/>
<comment type="function">
    <text evidence="1">Catalyzes the NADPH-dependent reduction of N-acetyl-5-glutamyl phosphate to yield N-acetyl-L-glutamate 5-semialdehyde.</text>
</comment>
<comment type="catalytic activity">
    <reaction evidence="1">
        <text>N-acetyl-L-glutamate 5-semialdehyde + phosphate + NADP(+) = N-acetyl-L-glutamyl 5-phosphate + NADPH + H(+)</text>
        <dbReference type="Rhea" id="RHEA:21588"/>
        <dbReference type="ChEBI" id="CHEBI:15378"/>
        <dbReference type="ChEBI" id="CHEBI:29123"/>
        <dbReference type="ChEBI" id="CHEBI:43474"/>
        <dbReference type="ChEBI" id="CHEBI:57783"/>
        <dbReference type="ChEBI" id="CHEBI:57936"/>
        <dbReference type="ChEBI" id="CHEBI:58349"/>
        <dbReference type="EC" id="1.2.1.38"/>
    </reaction>
</comment>
<comment type="pathway">
    <text evidence="1">Amino-acid biosynthesis; L-arginine biosynthesis; N(2)-acetyl-L-ornithine from L-glutamate: step 3/4.</text>
</comment>
<comment type="subcellular location">
    <subcellularLocation>
        <location evidence="1">Cytoplasm</location>
    </subcellularLocation>
</comment>
<comment type="similarity">
    <text evidence="1">Belongs to the NAGSA dehydrogenase family. Type 1 subfamily.</text>
</comment>
<name>ARGC_ACIB3</name>
<evidence type="ECO:0000255" key="1">
    <source>
        <dbReference type="HAMAP-Rule" id="MF_00150"/>
    </source>
</evidence>
<reference key="1">
    <citation type="journal article" date="2008" name="J. Bacteriol.">
        <title>Comparative genome sequence analysis of multidrug-resistant Acinetobacter baumannii.</title>
        <authorList>
            <person name="Adams M.D."/>
            <person name="Goglin K."/>
            <person name="Molyneaux N."/>
            <person name="Hujer K.M."/>
            <person name="Lavender H."/>
            <person name="Jamison J.J."/>
            <person name="MacDonald I.J."/>
            <person name="Martin K.M."/>
            <person name="Russo T."/>
            <person name="Campagnari A.A."/>
            <person name="Hujer A.M."/>
            <person name="Bonomo R.A."/>
            <person name="Gill S.R."/>
        </authorList>
    </citation>
    <scope>NUCLEOTIDE SEQUENCE [LARGE SCALE GENOMIC DNA]</scope>
    <source>
        <strain>AB307-0294</strain>
    </source>
</reference>
<protein>
    <recommendedName>
        <fullName evidence="1">N-acetyl-gamma-glutamyl-phosphate reductase</fullName>
        <shortName evidence="1">AGPR</shortName>
        <ecNumber evidence="1">1.2.1.38</ecNumber>
    </recommendedName>
    <alternativeName>
        <fullName evidence="1">N-acetyl-glutamate semialdehyde dehydrogenase</fullName>
        <shortName evidence="1">NAGSA dehydrogenase</shortName>
    </alternativeName>
</protein>
<sequence>MISVGIVGGTGYTGVELLRILLRHPKAQVRVLTSRTEAGKPVADMFPNLRGHTDLQFSDLNIDALKECDVVFFATPHGVAMQHAKDLIAAGTKVIDLAADFRLQNLEQFEKWYGMEHACPDVLKDSVYGLTELNREKIKQAQVIGNPGCYPTTVQLGLAPLLKSAQALIETKNIIIDAKSGVSGAGRKASLGMIYSENADNFKAYGVAGHRHHPEIVEALENIAGKKDVFEGLLFVPHLVPMIRGMLSTIYVDLTEAGKQTALQALYENFYANEKFVDVMPANSSPETRSVRGANELRIALYKPQPNKLIILAAQDNLVKGASGQAVQNMNLMFGFNEDEGLQGIGLLP</sequence>
<keyword id="KW-0028">Amino-acid biosynthesis</keyword>
<keyword id="KW-0055">Arginine biosynthesis</keyword>
<keyword id="KW-0963">Cytoplasm</keyword>
<keyword id="KW-0521">NADP</keyword>
<keyword id="KW-0560">Oxidoreductase</keyword>
<accession>B7H211</accession>